<comment type="function">
    <text evidence="4">Involved in the regulation of phagocytosis. May repress rab21.</text>
</comment>
<comment type="subunit">
    <text evidence="4">Interacts with limF and rab21.</text>
</comment>
<comment type="interaction">
    <interactant intactId="EBI-1808948">
        <id>Q55GV9</id>
    </interactant>
    <interactant intactId="EBI-1808928">
        <id>Q86I44</id>
        <label>limF</label>
    </interactant>
    <organismsDiffer>false</organismsDiffer>
    <experiments>3</experiments>
</comment>
<comment type="induction">
    <text evidence="4">Repressed by limF.</text>
</comment>
<protein>
    <recommendedName>
        <fullName>Calponin homology and LIM domain-containing protein</fullName>
        <shortName>CH-LIM</shortName>
    </recommendedName>
</protein>
<name>LIMCH_DICDI</name>
<dbReference type="EMBL" id="AAFI02000003">
    <property type="protein sequence ID" value="EAL73198.1"/>
    <property type="molecule type" value="Genomic_DNA"/>
</dbReference>
<dbReference type="RefSeq" id="XP_647075.1">
    <property type="nucleotide sequence ID" value="XM_641983.1"/>
</dbReference>
<dbReference type="SMR" id="Q55GV9"/>
<dbReference type="FunCoup" id="Q55GV9">
    <property type="interactions" value="580"/>
</dbReference>
<dbReference type="IntAct" id="Q55GV9">
    <property type="interactions" value="2"/>
</dbReference>
<dbReference type="STRING" id="44689.Q55GV9"/>
<dbReference type="PaxDb" id="44689-DDB0231986"/>
<dbReference type="EnsemblProtists" id="EAL73198">
    <property type="protein sequence ID" value="EAL73198"/>
    <property type="gene ID" value="DDB_G0267490"/>
</dbReference>
<dbReference type="GeneID" id="8615879"/>
<dbReference type="KEGG" id="ddi:DDB_G0267490"/>
<dbReference type="dictyBase" id="DDB_G0267490">
    <property type="gene designation" value="ChLim"/>
</dbReference>
<dbReference type="VEuPathDB" id="AmoebaDB:DDB_G0267490"/>
<dbReference type="eggNOG" id="KOG1703">
    <property type="taxonomic scope" value="Eukaryota"/>
</dbReference>
<dbReference type="eggNOG" id="KOG1704">
    <property type="taxonomic scope" value="Eukaryota"/>
</dbReference>
<dbReference type="HOGENOM" id="CLU_401396_0_0_1"/>
<dbReference type="InParanoid" id="Q55GV9"/>
<dbReference type="OMA" id="ISKYCEP"/>
<dbReference type="Reactome" id="R-DDI-446353">
    <property type="pathway name" value="Cell-extracellular matrix interactions"/>
</dbReference>
<dbReference type="PRO" id="PR:Q55GV9"/>
<dbReference type="Proteomes" id="UP000002195">
    <property type="component" value="Chromosome 1"/>
</dbReference>
<dbReference type="GO" id="GO:0005938">
    <property type="term" value="C:cell cortex"/>
    <property type="evidence" value="ECO:0000314"/>
    <property type="project" value="dictyBase"/>
</dbReference>
<dbReference type="GO" id="GO:0030863">
    <property type="term" value="C:cortical cytoskeleton"/>
    <property type="evidence" value="ECO:0000314"/>
    <property type="project" value="dictyBase"/>
</dbReference>
<dbReference type="GO" id="GO:0005829">
    <property type="term" value="C:cytosol"/>
    <property type="evidence" value="ECO:0000314"/>
    <property type="project" value="dictyBase"/>
</dbReference>
<dbReference type="GO" id="GO:0001891">
    <property type="term" value="C:phagocytic cup"/>
    <property type="evidence" value="ECO:0000314"/>
    <property type="project" value="dictyBase"/>
</dbReference>
<dbReference type="GO" id="GO:0045335">
    <property type="term" value="C:phagocytic vesicle"/>
    <property type="evidence" value="ECO:0000314"/>
    <property type="project" value="dictyBase"/>
</dbReference>
<dbReference type="GO" id="GO:0046872">
    <property type="term" value="F:metal ion binding"/>
    <property type="evidence" value="ECO:0007669"/>
    <property type="project" value="UniProtKB-KW"/>
</dbReference>
<dbReference type="GO" id="GO:0046847">
    <property type="term" value="P:filopodium assembly"/>
    <property type="evidence" value="ECO:0000315"/>
    <property type="project" value="dictyBase"/>
</dbReference>
<dbReference type="GO" id="GO:0050765">
    <property type="term" value="P:negative regulation of phagocytosis"/>
    <property type="evidence" value="ECO:0000315"/>
    <property type="project" value="dictyBase"/>
</dbReference>
<dbReference type="GO" id="GO:0006909">
    <property type="term" value="P:phagocytosis"/>
    <property type="evidence" value="ECO:0007669"/>
    <property type="project" value="UniProtKB-KW"/>
</dbReference>
<dbReference type="CDD" id="cd21208">
    <property type="entry name" value="CH_LMO7-like"/>
    <property type="match status" value="1"/>
</dbReference>
<dbReference type="CDD" id="cd08368">
    <property type="entry name" value="LIM"/>
    <property type="match status" value="3"/>
</dbReference>
<dbReference type="FunFam" id="2.10.110.10:FF:000179">
    <property type="entry name" value="Calponin homology and LIM domain-containing protein"/>
    <property type="match status" value="1"/>
</dbReference>
<dbReference type="FunFam" id="2.10.110.10:FF:000225">
    <property type="entry name" value="LIM domain-containing protein F"/>
    <property type="match status" value="1"/>
</dbReference>
<dbReference type="FunFam" id="2.10.110.10:FF:000135">
    <property type="entry name" value="LIM domain-containing protein, putative"/>
    <property type="match status" value="1"/>
</dbReference>
<dbReference type="Gene3D" id="1.10.418.10">
    <property type="entry name" value="Calponin-like domain"/>
    <property type="match status" value="1"/>
</dbReference>
<dbReference type="Gene3D" id="2.10.110.10">
    <property type="entry name" value="Cysteine Rich Protein"/>
    <property type="match status" value="5"/>
</dbReference>
<dbReference type="InterPro" id="IPR001715">
    <property type="entry name" value="CH_dom"/>
</dbReference>
<dbReference type="InterPro" id="IPR036872">
    <property type="entry name" value="CH_dom_sf"/>
</dbReference>
<dbReference type="InterPro" id="IPR003096">
    <property type="entry name" value="SM22_calponin"/>
</dbReference>
<dbReference type="InterPro" id="IPR001781">
    <property type="entry name" value="Znf_LIM"/>
</dbReference>
<dbReference type="PANTHER" id="PTHR24207">
    <property type="entry name" value="ZYX102 PROTEIN"/>
    <property type="match status" value="1"/>
</dbReference>
<dbReference type="PANTHER" id="PTHR24207:SF2">
    <property type="entry name" value="ZYX102 PROTEIN"/>
    <property type="match status" value="1"/>
</dbReference>
<dbReference type="Pfam" id="PF00307">
    <property type="entry name" value="CH"/>
    <property type="match status" value="1"/>
</dbReference>
<dbReference type="Pfam" id="PF00412">
    <property type="entry name" value="LIM"/>
    <property type="match status" value="4"/>
</dbReference>
<dbReference type="PRINTS" id="PR00888">
    <property type="entry name" value="SM22CALPONIN"/>
</dbReference>
<dbReference type="SMART" id="SM00033">
    <property type="entry name" value="CH"/>
    <property type="match status" value="1"/>
</dbReference>
<dbReference type="SMART" id="SM00132">
    <property type="entry name" value="LIM"/>
    <property type="match status" value="6"/>
</dbReference>
<dbReference type="SUPFAM" id="SSF47576">
    <property type="entry name" value="Calponin-homology domain, CH-domain"/>
    <property type="match status" value="1"/>
</dbReference>
<dbReference type="SUPFAM" id="SSF57716">
    <property type="entry name" value="Glucocorticoid receptor-like (DNA-binding domain)"/>
    <property type="match status" value="3"/>
</dbReference>
<dbReference type="PROSITE" id="PS50021">
    <property type="entry name" value="CH"/>
    <property type="match status" value="1"/>
</dbReference>
<dbReference type="PROSITE" id="PS00478">
    <property type="entry name" value="LIM_DOMAIN_1"/>
    <property type="match status" value="3"/>
</dbReference>
<dbReference type="PROSITE" id="PS50023">
    <property type="entry name" value="LIM_DOMAIN_2"/>
    <property type="match status" value="6"/>
</dbReference>
<gene>
    <name type="primary">ChLim</name>
    <name type="ORF">DDB_G0267490</name>
</gene>
<keyword id="KW-0440">LIM domain</keyword>
<keyword id="KW-0479">Metal-binding</keyword>
<keyword id="KW-0581">Phagocytosis</keyword>
<keyword id="KW-1185">Reference proteome</keyword>
<keyword id="KW-0677">Repeat</keyword>
<keyword id="KW-0862">Zinc</keyword>
<proteinExistence type="evidence at protein level"/>
<organism>
    <name type="scientific">Dictyostelium discoideum</name>
    <name type="common">Social amoeba</name>
    <dbReference type="NCBI Taxonomy" id="44689"/>
    <lineage>
        <taxon>Eukaryota</taxon>
        <taxon>Amoebozoa</taxon>
        <taxon>Evosea</taxon>
        <taxon>Eumycetozoa</taxon>
        <taxon>Dictyostelia</taxon>
        <taxon>Dictyosteliales</taxon>
        <taxon>Dictyosteliaceae</taxon>
        <taxon>Dictyostelium</taxon>
    </lineage>
</organism>
<evidence type="ECO:0000255" key="1">
    <source>
        <dbReference type="PROSITE-ProRule" id="PRU00044"/>
    </source>
</evidence>
<evidence type="ECO:0000255" key="2">
    <source>
        <dbReference type="PROSITE-ProRule" id="PRU00125"/>
    </source>
</evidence>
<evidence type="ECO:0000256" key="3">
    <source>
        <dbReference type="SAM" id="MobiDB-lite"/>
    </source>
</evidence>
<evidence type="ECO:0000269" key="4">
    <source>
    </source>
</evidence>
<reference key="1">
    <citation type="journal article" date="2005" name="Nature">
        <title>The genome of the social amoeba Dictyostelium discoideum.</title>
        <authorList>
            <person name="Eichinger L."/>
            <person name="Pachebat J.A."/>
            <person name="Gloeckner G."/>
            <person name="Rajandream M.A."/>
            <person name="Sucgang R."/>
            <person name="Berriman M."/>
            <person name="Song J."/>
            <person name="Olsen R."/>
            <person name="Szafranski K."/>
            <person name="Xu Q."/>
            <person name="Tunggal B."/>
            <person name="Kummerfeld S."/>
            <person name="Madera M."/>
            <person name="Konfortov B.A."/>
            <person name="Rivero F."/>
            <person name="Bankier A.T."/>
            <person name="Lehmann R."/>
            <person name="Hamlin N."/>
            <person name="Davies R."/>
            <person name="Gaudet P."/>
            <person name="Fey P."/>
            <person name="Pilcher K."/>
            <person name="Chen G."/>
            <person name="Saunders D."/>
            <person name="Sodergren E.J."/>
            <person name="Davis P."/>
            <person name="Kerhornou A."/>
            <person name="Nie X."/>
            <person name="Hall N."/>
            <person name="Anjard C."/>
            <person name="Hemphill L."/>
            <person name="Bason N."/>
            <person name="Farbrother P."/>
            <person name="Desany B."/>
            <person name="Just E."/>
            <person name="Morio T."/>
            <person name="Rost R."/>
            <person name="Churcher C.M."/>
            <person name="Cooper J."/>
            <person name="Haydock S."/>
            <person name="van Driessche N."/>
            <person name="Cronin A."/>
            <person name="Goodhead I."/>
            <person name="Muzny D.M."/>
            <person name="Mourier T."/>
            <person name="Pain A."/>
            <person name="Lu M."/>
            <person name="Harper D."/>
            <person name="Lindsay R."/>
            <person name="Hauser H."/>
            <person name="James K.D."/>
            <person name="Quiles M."/>
            <person name="Madan Babu M."/>
            <person name="Saito T."/>
            <person name="Buchrieser C."/>
            <person name="Wardroper A."/>
            <person name="Felder M."/>
            <person name="Thangavelu M."/>
            <person name="Johnson D."/>
            <person name="Knights A."/>
            <person name="Loulseged H."/>
            <person name="Mungall K.L."/>
            <person name="Oliver K."/>
            <person name="Price C."/>
            <person name="Quail M.A."/>
            <person name="Urushihara H."/>
            <person name="Hernandez J."/>
            <person name="Rabbinowitsch E."/>
            <person name="Steffen D."/>
            <person name="Sanders M."/>
            <person name="Ma J."/>
            <person name="Kohara Y."/>
            <person name="Sharp S."/>
            <person name="Simmonds M.N."/>
            <person name="Spiegler S."/>
            <person name="Tivey A."/>
            <person name="Sugano S."/>
            <person name="White B."/>
            <person name="Walker D."/>
            <person name="Woodward J.R."/>
            <person name="Winckler T."/>
            <person name="Tanaka Y."/>
            <person name="Shaulsky G."/>
            <person name="Schleicher M."/>
            <person name="Weinstock G.M."/>
            <person name="Rosenthal A."/>
            <person name="Cox E.C."/>
            <person name="Chisholm R.L."/>
            <person name="Gibbs R.A."/>
            <person name="Loomis W.F."/>
            <person name="Platzer M."/>
            <person name="Kay R.R."/>
            <person name="Williams J.G."/>
            <person name="Dear P.H."/>
            <person name="Noegel A.A."/>
            <person name="Barrell B.G."/>
            <person name="Kuspa A."/>
        </authorList>
    </citation>
    <scope>NUCLEOTIDE SEQUENCE [LARGE SCALE GENOMIC DNA]</scope>
    <source>
        <strain>AX4</strain>
    </source>
</reference>
<reference key="2">
    <citation type="journal article" date="2005" name="EMBO J.">
        <title>A Rab21/LIM-only/CH-LIM complex regulates phagocytosis via both activating and inhibitory mechanisms.</title>
        <authorList>
            <person name="Khurana T."/>
            <person name="Brzostowski J.A."/>
            <person name="Kimmel A.R."/>
        </authorList>
    </citation>
    <scope>FUNCTION</scope>
    <scope>INDUCTION</scope>
    <scope>INTERACTION WITH LIMF AND RAB21</scope>
</reference>
<sequence>MIKANWTSTSAFNLELALDESRDWIERVINQKFPSDFQSSLRDGIFLCKLINQIQPNSVPKYNQSPSTDFAKRENIQLFIKSAKHSMGLRDTQLFESQDLFESIRIRNIAITLYWLGRAARASQTYKGPQLDLLKFQGMNCSACKKAITNNDYLTTMTQQFHTSCAVCCSCSCKLDPKKKFYQESNNFWCENCMLGATNLGGSNNSSGGKNKSNNNNNNKCSGCFGSLEKGYVPDENDKEKKYCTSCICDLCHDPLIGNFQVKDGKKVCDSCSCKSCGKSLEDGYYEEGISKYCEPCAKDRNKPKQVMDKDGHDHHHHNHNKPTTTTTTTNSNSPLAKKKSDSCKMCDKPVDNKTKKYGDDRDKYCTPHEKDGTCGKCNGELVGSAISVMDKNFHPQCFKCDSCNKNLNQNDQIKKSPTTGNPLCGPCSSNNNKSSKNCHDCKKPISGSSVEALDRPYHPNCLKCYSCSKNLKEDFTEVDNEPFCNPCASQLNQYTSGNQKQPKQGGSPFITSGWLDSDRCVVCVKPLNGEVAKIFDSFYHKGCFKCTDKSCNAPLLTGYFPHDKKPYCQKCSIKIQQSTTTDHCAKCSKPIIEGSILKVAGKVYHKSCYDNEKHTSSSSSSSSVNCFKCKSQITGTQFVRLDQKDYCMKCSPSASSSTTVTHGERLNYGMTVDPRSGKRVFNTSK</sequence>
<feature type="chain" id="PRO_0000328170" description="Calponin homology and LIM domain-containing protein">
    <location>
        <begin position="1"/>
        <end position="686"/>
    </location>
</feature>
<feature type="domain" description="Calponin-homology (CH)" evidence="1">
    <location>
        <begin position="15"/>
        <end position="120"/>
    </location>
</feature>
<feature type="domain" description="LIM zinc-binding 1" evidence="2">
    <location>
        <begin position="139"/>
        <end position="200"/>
    </location>
</feature>
<feature type="domain" description="LIM zinc-binding 2" evidence="2">
    <location>
        <begin position="219"/>
        <end position="279"/>
    </location>
</feature>
<feature type="domain" description="LIM zinc-binding 3" evidence="2">
    <location>
        <begin position="373"/>
        <end position="435"/>
    </location>
</feature>
<feature type="domain" description="LIM zinc-binding 4" evidence="2">
    <location>
        <begin position="437"/>
        <end position="495"/>
    </location>
</feature>
<feature type="domain" description="LIM zinc-binding 5" evidence="2">
    <location>
        <begin position="519"/>
        <end position="579"/>
    </location>
</feature>
<feature type="domain" description="LIM zinc-binding 6" evidence="2">
    <location>
        <begin position="583"/>
        <end position="658"/>
    </location>
</feature>
<feature type="region of interest" description="Disordered" evidence="3">
    <location>
        <begin position="305"/>
        <end position="345"/>
    </location>
</feature>
<feature type="compositionally biased region" description="Basic and acidic residues" evidence="3">
    <location>
        <begin position="305"/>
        <end position="314"/>
    </location>
</feature>
<feature type="compositionally biased region" description="Low complexity" evidence="3">
    <location>
        <begin position="322"/>
        <end position="333"/>
    </location>
</feature>
<accession>Q55GV9</accession>